<reference key="1">
    <citation type="journal article" date="1996" name="Nucleic Acids Res.">
        <title>Complete sequence analysis of the genome of the bacterium Mycoplasma pneumoniae.</title>
        <authorList>
            <person name="Himmelreich R."/>
            <person name="Hilbert H."/>
            <person name="Plagens H."/>
            <person name="Pirkl E."/>
            <person name="Li B.-C."/>
            <person name="Herrmann R."/>
        </authorList>
    </citation>
    <scope>NUCLEOTIDE SEQUENCE [LARGE SCALE GENOMIC DNA]</scope>
    <source>
        <strain>ATCC 29342 / M129 / Subtype 1</strain>
    </source>
</reference>
<name>SYK_MYCPN</name>
<accession>P75500</accession>
<comment type="catalytic activity">
    <reaction>
        <text>tRNA(Lys) + L-lysine + ATP = L-lysyl-tRNA(Lys) + AMP + diphosphate</text>
        <dbReference type="Rhea" id="RHEA:20792"/>
        <dbReference type="Rhea" id="RHEA-COMP:9696"/>
        <dbReference type="Rhea" id="RHEA-COMP:9697"/>
        <dbReference type="ChEBI" id="CHEBI:30616"/>
        <dbReference type="ChEBI" id="CHEBI:32551"/>
        <dbReference type="ChEBI" id="CHEBI:33019"/>
        <dbReference type="ChEBI" id="CHEBI:78442"/>
        <dbReference type="ChEBI" id="CHEBI:78529"/>
        <dbReference type="ChEBI" id="CHEBI:456215"/>
        <dbReference type="EC" id="6.1.1.6"/>
    </reaction>
</comment>
<comment type="cofactor">
    <cofactor evidence="1">
        <name>Mg(2+)</name>
        <dbReference type="ChEBI" id="CHEBI:18420"/>
    </cofactor>
    <text evidence="1">Binds 3 Mg(2+) ions per subunit.</text>
</comment>
<comment type="subunit">
    <text evidence="1">Homodimer.</text>
</comment>
<comment type="subcellular location">
    <subcellularLocation>
        <location evidence="1">Cytoplasm</location>
    </subcellularLocation>
</comment>
<comment type="similarity">
    <text evidence="2">Belongs to the class-II aminoacyl-tRNA synthetase family.</text>
</comment>
<proteinExistence type="inferred from homology"/>
<dbReference type="EC" id="6.1.1.6"/>
<dbReference type="EMBL" id="U00089">
    <property type="protein sequence ID" value="AAB96206.1"/>
    <property type="molecule type" value="Genomic_DNA"/>
</dbReference>
<dbReference type="PIR" id="S73884">
    <property type="entry name" value="S73884"/>
</dbReference>
<dbReference type="RefSeq" id="NP_109965.1">
    <property type="nucleotide sequence ID" value="NC_000912.1"/>
</dbReference>
<dbReference type="RefSeq" id="WP_010874634.1">
    <property type="nucleotide sequence ID" value="NZ_OU342337.1"/>
</dbReference>
<dbReference type="SMR" id="P75500"/>
<dbReference type="IntAct" id="P75500">
    <property type="interactions" value="2"/>
</dbReference>
<dbReference type="STRING" id="272634.MPN_277"/>
<dbReference type="EnsemblBacteria" id="AAB96206">
    <property type="protein sequence ID" value="AAB96206"/>
    <property type="gene ID" value="MPN_277"/>
</dbReference>
<dbReference type="GeneID" id="66609074"/>
<dbReference type="KEGG" id="mpn:MPN_277"/>
<dbReference type="PATRIC" id="fig|272634.6.peg.297"/>
<dbReference type="HOGENOM" id="CLU_008255_6_0_14"/>
<dbReference type="OrthoDB" id="9801152at2"/>
<dbReference type="BioCyc" id="MPNE272634:G1GJ3-435-MONOMER"/>
<dbReference type="Proteomes" id="UP000000808">
    <property type="component" value="Chromosome"/>
</dbReference>
<dbReference type="GO" id="GO:0005829">
    <property type="term" value="C:cytosol"/>
    <property type="evidence" value="ECO:0007669"/>
    <property type="project" value="TreeGrafter"/>
</dbReference>
<dbReference type="GO" id="GO:0005524">
    <property type="term" value="F:ATP binding"/>
    <property type="evidence" value="ECO:0007669"/>
    <property type="project" value="UniProtKB-UniRule"/>
</dbReference>
<dbReference type="GO" id="GO:0004824">
    <property type="term" value="F:lysine-tRNA ligase activity"/>
    <property type="evidence" value="ECO:0007669"/>
    <property type="project" value="UniProtKB-UniRule"/>
</dbReference>
<dbReference type="GO" id="GO:0000287">
    <property type="term" value="F:magnesium ion binding"/>
    <property type="evidence" value="ECO:0007669"/>
    <property type="project" value="UniProtKB-UniRule"/>
</dbReference>
<dbReference type="GO" id="GO:0000049">
    <property type="term" value="F:tRNA binding"/>
    <property type="evidence" value="ECO:0007669"/>
    <property type="project" value="TreeGrafter"/>
</dbReference>
<dbReference type="GO" id="GO:0006430">
    <property type="term" value="P:lysyl-tRNA aminoacylation"/>
    <property type="evidence" value="ECO:0007669"/>
    <property type="project" value="UniProtKB-UniRule"/>
</dbReference>
<dbReference type="CDD" id="cd00775">
    <property type="entry name" value="LysRS_core"/>
    <property type="match status" value="1"/>
</dbReference>
<dbReference type="CDD" id="cd04322">
    <property type="entry name" value="LysRS_N"/>
    <property type="match status" value="1"/>
</dbReference>
<dbReference type="Gene3D" id="3.30.930.10">
    <property type="entry name" value="Bira Bifunctional Protein, Domain 2"/>
    <property type="match status" value="1"/>
</dbReference>
<dbReference type="Gene3D" id="2.40.50.140">
    <property type="entry name" value="Nucleic acid-binding proteins"/>
    <property type="match status" value="1"/>
</dbReference>
<dbReference type="HAMAP" id="MF_00252">
    <property type="entry name" value="Lys_tRNA_synth_class2"/>
    <property type="match status" value="1"/>
</dbReference>
<dbReference type="InterPro" id="IPR004364">
    <property type="entry name" value="Aa-tRNA-synt_II"/>
</dbReference>
<dbReference type="InterPro" id="IPR006195">
    <property type="entry name" value="aa-tRNA-synth_II"/>
</dbReference>
<dbReference type="InterPro" id="IPR045864">
    <property type="entry name" value="aa-tRNA-synth_II/BPL/LPL"/>
</dbReference>
<dbReference type="InterPro" id="IPR002313">
    <property type="entry name" value="Lys-tRNA-ligase_II"/>
</dbReference>
<dbReference type="InterPro" id="IPR044136">
    <property type="entry name" value="Lys-tRNA-ligase_II_N"/>
</dbReference>
<dbReference type="InterPro" id="IPR018149">
    <property type="entry name" value="Lys-tRNA-synth_II_C"/>
</dbReference>
<dbReference type="InterPro" id="IPR012340">
    <property type="entry name" value="NA-bd_OB-fold"/>
</dbReference>
<dbReference type="InterPro" id="IPR004365">
    <property type="entry name" value="NA-bd_OB_tRNA"/>
</dbReference>
<dbReference type="NCBIfam" id="TIGR00499">
    <property type="entry name" value="lysS_bact"/>
    <property type="match status" value="1"/>
</dbReference>
<dbReference type="NCBIfam" id="NF001756">
    <property type="entry name" value="PRK00484.1"/>
    <property type="match status" value="1"/>
</dbReference>
<dbReference type="PANTHER" id="PTHR42918:SF15">
    <property type="entry name" value="LYSINE--TRNA LIGASE, CHLOROPLASTIC_MITOCHONDRIAL"/>
    <property type="match status" value="1"/>
</dbReference>
<dbReference type="PANTHER" id="PTHR42918">
    <property type="entry name" value="LYSYL-TRNA SYNTHETASE"/>
    <property type="match status" value="1"/>
</dbReference>
<dbReference type="Pfam" id="PF00152">
    <property type="entry name" value="tRNA-synt_2"/>
    <property type="match status" value="1"/>
</dbReference>
<dbReference type="Pfam" id="PF01336">
    <property type="entry name" value="tRNA_anti-codon"/>
    <property type="match status" value="1"/>
</dbReference>
<dbReference type="PRINTS" id="PR00982">
    <property type="entry name" value="TRNASYNTHLYS"/>
</dbReference>
<dbReference type="SUPFAM" id="SSF55681">
    <property type="entry name" value="Class II aaRS and biotin synthetases"/>
    <property type="match status" value="1"/>
</dbReference>
<dbReference type="SUPFAM" id="SSF50249">
    <property type="entry name" value="Nucleic acid-binding proteins"/>
    <property type="match status" value="1"/>
</dbReference>
<dbReference type="PROSITE" id="PS50862">
    <property type="entry name" value="AA_TRNA_LIGASE_II"/>
    <property type="match status" value="1"/>
</dbReference>
<feature type="chain" id="PRO_0000152651" description="Lysine--tRNA ligase">
    <location>
        <begin position="1"/>
        <end position="489"/>
    </location>
</feature>
<feature type="binding site" evidence="1">
    <location>
        <position position="399"/>
    </location>
    <ligand>
        <name>Mg(2+)</name>
        <dbReference type="ChEBI" id="CHEBI:18420"/>
        <label>1</label>
    </ligand>
</feature>
<feature type="binding site" evidence="1">
    <location>
        <position position="406"/>
    </location>
    <ligand>
        <name>Mg(2+)</name>
        <dbReference type="ChEBI" id="CHEBI:18420"/>
        <label>1</label>
    </ligand>
</feature>
<feature type="binding site" evidence="1">
    <location>
        <position position="406"/>
    </location>
    <ligand>
        <name>Mg(2+)</name>
        <dbReference type="ChEBI" id="CHEBI:18420"/>
        <label>2</label>
    </ligand>
</feature>
<gene>
    <name type="primary">lysS</name>
    <name type="ordered locus">MPN_277</name>
    <name type="ORF">MP558</name>
</gene>
<organism>
    <name type="scientific">Mycoplasma pneumoniae (strain ATCC 29342 / M129 / Subtype 1)</name>
    <name type="common">Mycoplasmoides pneumoniae</name>
    <dbReference type="NCBI Taxonomy" id="272634"/>
    <lineage>
        <taxon>Bacteria</taxon>
        <taxon>Bacillati</taxon>
        <taxon>Mycoplasmatota</taxon>
        <taxon>Mycoplasmoidales</taxon>
        <taxon>Mycoplasmoidaceae</taxon>
        <taxon>Mycoplasmoides</taxon>
    </lineage>
</organism>
<evidence type="ECO:0000250" key="1"/>
<evidence type="ECO:0000305" key="2"/>
<protein>
    <recommendedName>
        <fullName>Lysine--tRNA ligase</fullName>
        <ecNumber>6.1.1.6</ecNumber>
    </recommendedName>
    <alternativeName>
        <fullName>Lysyl-tRNA synthetase</fullName>
        <shortName>LysRS</shortName>
    </alternativeName>
</protein>
<sequence>MSDRLNDQAQNRLQKLLNLKQTGNDPYLITKIENTHSAASFQKAFANQSDAELKQYQVILTGRIIALRQTFIIIQDFSGKMQLYINKKTAPELFEYFNNYIDLGDQIVATGHPMMTKTGVLTLNVERLQIVAKCLQTPPEKWHGLTDPEARARKRYLDLTYNRAQVEVFLKRTQIITAIRTFLNEAGFLEVETPILQAVLGGANAKPFKTHYNALKGDFYLRIANEIALKKLIVGGLPKVYEMGRMFRNEGVDTTHNPEFTSIEMYQANADYAVMMDLTENLIKFVCKTLNQWSFNWNGQTLDLAKPFKKVKMVDLICQVTGVNFDDVKDDQTAIALAKQHKVELKKHEQNKQHIINRFFEQFCEHTLIQPTFVTHYPKAVSPLAKQDPHNPEFTERFELFINTKELANAYSELNDPLEQRARFEQQLQEKRMGNDEASELDESFLDALSFGLPPTGGLGIGVDRLVMLLCECSSIRDVVFFPQLRELK</sequence>
<keyword id="KW-0030">Aminoacyl-tRNA synthetase</keyword>
<keyword id="KW-0067">ATP-binding</keyword>
<keyword id="KW-0963">Cytoplasm</keyword>
<keyword id="KW-0436">Ligase</keyword>
<keyword id="KW-0460">Magnesium</keyword>
<keyword id="KW-0479">Metal-binding</keyword>
<keyword id="KW-0547">Nucleotide-binding</keyword>
<keyword id="KW-0648">Protein biosynthesis</keyword>
<keyword id="KW-1185">Reference proteome</keyword>